<organism>
    <name type="scientific">Influenza A virus (strain A/Guinea fowl/New York/4-3587/1984 H3N8)</name>
    <dbReference type="NCBI Taxonomy" id="387235"/>
    <lineage>
        <taxon>Viruses</taxon>
        <taxon>Riboviria</taxon>
        <taxon>Orthornavirae</taxon>
        <taxon>Negarnaviricota</taxon>
        <taxon>Polyploviricotina</taxon>
        <taxon>Insthoviricetes</taxon>
        <taxon>Articulavirales</taxon>
        <taxon>Orthomyxoviridae</taxon>
        <taxon>Alphainfluenzavirus</taxon>
        <taxon>Alphainfluenzavirus influenzae</taxon>
        <taxon>Influenza A virus</taxon>
    </lineage>
</organism>
<feature type="chain" id="PRO_0000078690" description="Neuraminidase">
    <location>
        <begin position="1"/>
        <end position="470"/>
    </location>
</feature>
<feature type="topological domain" description="Intravirion" evidence="1">
    <location>
        <begin position="1"/>
        <end position="14"/>
    </location>
</feature>
<feature type="transmembrane region" description="Helical" evidence="1">
    <location>
        <begin position="15"/>
        <end position="35"/>
    </location>
</feature>
<feature type="topological domain" description="Virion surface" evidence="1">
    <location>
        <begin position="36"/>
        <end position="470"/>
    </location>
</feature>
<feature type="region of interest" description="Involved in apical transport and lipid raft association" evidence="1">
    <location>
        <begin position="11"/>
        <end position="32"/>
    </location>
</feature>
<feature type="region of interest" description="Hypervariable stalk region" evidence="1">
    <location>
        <begin position="32"/>
        <end position="86"/>
    </location>
</feature>
<feature type="region of interest" description="Head of neuraminidase" evidence="1">
    <location>
        <begin position="89"/>
        <end position="470"/>
    </location>
</feature>
<feature type="active site" description="Proton donor/acceptor" evidence="1">
    <location>
        <position position="149"/>
    </location>
</feature>
<feature type="active site" description="Nucleophile" evidence="1">
    <location>
        <position position="402"/>
    </location>
</feature>
<feature type="binding site" evidence="1">
    <location>
        <position position="116"/>
    </location>
    <ligand>
        <name>substrate</name>
    </ligand>
</feature>
<feature type="binding site" evidence="1">
    <location>
        <position position="150"/>
    </location>
    <ligand>
        <name>substrate</name>
    </ligand>
</feature>
<feature type="binding site" evidence="1">
    <location>
        <begin position="275"/>
        <end position="276"/>
    </location>
    <ligand>
        <name>substrate</name>
    </ligand>
</feature>
<feature type="binding site" evidence="1">
    <location>
        <position position="291"/>
    </location>
    <ligand>
        <name>substrate</name>
    </ligand>
</feature>
<feature type="binding site" evidence="1">
    <location>
        <position position="292"/>
    </location>
    <ligand>
        <name>Ca(2+)</name>
        <dbReference type="ChEBI" id="CHEBI:29108"/>
    </ligand>
</feature>
<feature type="binding site" evidence="1">
    <location>
        <position position="296"/>
    </location>
    <ligand>
        <name>Ca(2+)</name>
        <dbReference type="ChEBI" id="CHEBI:29108"/>
    </ligand>
</feature>
<feature type="binding site" evidence="1">
    <location>
        <position position="322"/>
    </location>
    <ligand>
        <name>Ca(2+)</name>
        <dbReference type="ChEBI" id="CHEBI:29108"/>
    </ligand>
</feature>
<feature type="binding site" evidence="1">
    <location>
        <position position="368"/>
    </location>
    <ligand>
        <name>substrate</name>
    </ligand>
</feature>
<feature type="glycosylation site" description="N-linked (GlcNAc...) asparagine; by host" evidence="1">
    <location>
        <position position="42"/>
    </location>
</feature>
<feature type="glycosylation site" description="N-linked (GlcNAc...) asparagine; by host" evidence="1">
    <location>
        <position position="46"/>
    </location>
</feature>
<feature type="glycosylation site" description="N-linked (GlcNAc...) asparagine; by host" evidence="1">
    <location>
        <position position="54"/>
    </location>
</feature>
<feature type="glycosylation site" description="N-linked (GlcNAc...) asparagine; by host" evidence="1">
    <location>
        <position position="84"/>
    </location>
</feature>
<feature type="glycosylation site" description="N-linked (GlcNAc...) asparagine; by host" evidence="1">
    <location>
        <position position="144"/>
    </location>
</feature>
<feature type="glycosylation site" description="N-linked (GlcNAc...) asparagine; by host" evidence="1">
    <location>
        <position position="293"/>
    </location>
</feature>
<feature type="glycosylation site" description="N-linked (GlcNAc...) asparagine; by host" evidence="1">
    <location>
        <position position="398"/>
    </location>
</feature>
<feature type="disulfide bond" evidence="1">
    <location>
        <begin position="90"/>
        <end position="417"/>
    </location>
</feature>
<feature type="disulfide bond" evidence="1">
    <location>
        <begin position="122"/>
        <end position="127"/>
    </location>
</feature>
<feature type="disulfide bond" evidence="1">
    <location>
        <begin position="182"/>
        <end position="229"/>
    </location>
</feature>
<feature type="disulfide bond" evidence="1">
    <location>
        <begin position="231"/>
        <end position="236"/>
    </location>
</feature>
<feature type="disulfide bond" evidence="1">
    <location>
        <begin position="277"/>
        <end position="290"/>
    </location>
</feature>
<feature type="disulfide bond" evidence="1">
    <location>
        <begin position="279"/>
        <end position="288"/>
    </location>
</feature>
<feature type="disulfide bond" evidence="1">
    <location>
        <begin position="316"/>
        <end position="335"/>
    </location>
</feature>
<feature type="disulfide bond" evidence="1">
    <location>
        <begin position="421"/>
        <end position="446"/>
    </location>
</feature>
<reference key="1">
    <citation type="journal article" date="1993" name="Virology">
        <title>Phylogenetic analysis of the N8 neuraminidase gene of influenza A viruses.</title>
        <authorList>
            <person name="Saito T."/>
            <person name="Kawaoka Y."/>
            <person name="Webster R.G."/>
        </authorList>
    </citation>
    <scope>NUCLEOTIDE SEQUENCE [GENOMIC RNA]</scope>
</reference>
<reference key="2">
    <citation type="journal article" date="2004" name="Virus Res.">
        <title>Assembly and budding of influenza virus.</title>
        <authorList>
            <person name="Nayak D.P."/>
            <person name="Hui E.K."/>
            <person name="Barman S."/>
        </authorList>
    </citation>
    <scope>REVIEW</scope>
</reference>
<reference key="3">
    <citation type="journal article" date="2005" name="N. Engl. J. Med.">
        <title>Neuraminidase inhibitors for influenza.</title>
        <authorList>
            <person name="Moscona A."/>
        </authorList>
    </citation>
    <scope>REVIEW</scope>
</reference>
<reference key="4">
    <citation type="journal article" date="2005" name="Biol. Pharm. Bull.">
        <title>Sialobiology of influenza: molecular mechanism of host range variation of influenza viruses.</title>
        <authorList>
            <person name="Suzuki Y."/>
        </authorList>
    </citation>
    <scope>REVIEW</scope>
</reference>
<comment type="function">
    <text evidence="1">Catalyzes the removal of terminal sialic acid residues from viral and cellular glycoconjugates. Cleaves off the terminal sialic acids on the glycosylated HA during virus budding to facilitate virus release. Additionally helps virus spread through the circulation by further removing sialic acids from the cell surface. These cleavages prevent self-aggregation and ensure the efficient spread of the progeny virus from cell to cell. Otherwise, infection would be limited to one round of replication. Described as a receptor-destroying enzyme because it cleaves a terminal sialic acid from the cellular receptors. May facilitate viral invasion of the upper airways by cleaving the sialic acid moieties on the mucin of the airway epithelial cells. Likely to plays a role in the budding process through its association with lipid rafts during intracellular transport. May additionally display a raft-association independent effect on budding. Plays a role in the determination of host range restriction on replication and virulence. Sialidase activity in late endosome/lysosome traffic seems to enhance virus replication.</text>
</comment>
<comment type="catalytic activity">
    <reaction evidence="1">
        <text>Hydrolysis of alpha-(2-&gt;3)-, alpha-(2-&gt;6)-, alpha-(2-&gt;8)- glycosidic linkages of terminal sialic acid residues in oligosaccharides, glycoproteins, glycolipids, colominic acid and synthetic substrates.</text>
        <dbReference type="EC" id="3.2.1.18"/>
    </reaction>
</comment>
<comment type="cofactor">
    <cofactor evidence="1">
        <name>Ca(2+)</name>
        <dbReference type="ChEBI" id="CHEBI:29108"/>
    </cofactor>
</comment>
<comment type="activity regulation">
    <text evidence="1">Inhibited by the neuraminidase inhibitors zanamivir (Relenza) and oseltamivir (Tamiflu). These drugs interfere with the release of progeny virus from infected cells and are effective against all influenza strains. Resistance to neuraminidase inhibitors is quite rare.</text>
</comment>
<comment type="subunit">
    <text evidence="1">Homotetramer.</text>
</comment>
<comment type="subcellular location">
    <subcellularLocation>
        <location evidence="1">Virion membrane</location>
    </subcellularLocation>
    <subcellularLocation>
        <location evidence="1">Host apical cell membrane</location>
        <topology evidence="1">Single-pass type II membrane protein</topology>
    </subcellularLocation>
    <text evidence="1">Preferentially accumulates at the apical plasma membrane in infected polarized epithelial cells, which is the virus assembly site. Uses lipid rafts for cell surface transport and apical sorting. In the virion, forms a mushroom-shaped spike on the surface of the membrane.</text>
</comment>
<comment type="domain">
    <text evidence="1">Intact N-terminus is essential for virion morphogenesis. Possesses two apical sorting signals, one in the ectodomain, which is likely to be a glycan, and the other in the transmembrane domain. The transmembrane domain also plays a role in lipid raft association.</text>
</comment>
<comment type="PTM">
    <text evidence="1">N-glycosylated.</text>
</comment>
<comment type="miscellaneous">
    <text>The influenza A genome consist of 8 RNA segments. Genetic variation of hemagglutinin and/or neuraminidase genes results in the emergence of new influenza strains. The mechanism of variation can be the result of point mutations or the result of genetic reassortment between segments of two different strains.</text>
</comment>
<comment type="similarity">
    <text evidence="1">Belongs to the glycosyl hydrolase 34 family.</text>
</comment>
<proteinExistence type="inferred from homology"/>
<sequence>MNPNQKIITIGSVSLGLVVLNILLHIVSITITVLVLPGNGNNGSCNETVIREYNETVRIEKITQWHNTNVIEYIERPESDHFMNNTEPLCDAKGFAPFSKDNGIRIGSRGHVFVIREPFVSCSPTECRTFFITQGSLLNDKHSNGTVKDRSPYRTLMSVEIGQSPNVYQARFEAVAWSATRCHDGKKWMTIGVTGPDAKAVAVVHYGGIPTDVIQSWAGDILRTQESSCTCIQGECYWVMTDGPANRQAQYRAFKAKQGKIIGQTEISFNGGHIEECSCYPNEGKVECVCRDNWTGTNRPVLVISPDLSYRVGYLCAGLPSDTPRGEDSQFTGSCTSPMGNQGYGVKGFGFRQGIDVWMGRTISRTSRSGFEILRVRNGWVQNSKEQIKRQVVVDNLNWSGYSGSFTLPVELTKRNCLVPCFWVEMIRGKPEEKTIWTSSSSIVMCGVDHEIADWSWHDGAILPFDIDKM</sequence>
<accession>Q07574</accession>
<dbReference type="EC" id="3.2.1.18" evidence="1"/>
<dbReference type="EMBL" id="L06584">
    <property type="protein sequence ID" value="AAA43428.1"/>
    <property type="molecule type" value="Genomic_RNA"/>
</dbReference>
<dbReference type="SMR" id="Q07574"/>
<dbReference type="CAZy" id="GH34">
    <property type="family name" value="Glycoside Hydrolase Family 34"/>
</dbReference>
<dbReference type="GlyCosmos" id="Q07574">
    <property type="glycosylation" value="7 sites, No reported glycans"/>
</dbReference>
<dbReference type="GO" id="GO:0020002">
    <property type="term" value="C:host cell plasma membrane"/>
    <property type="evidence" value="ECO:0007669"/>
    <property type="project" value="UniProtKB-SubCell"/>
</dbReference>
<dbReference type="GO" id="GO:0016020">
    <property type="term" value="C:membrane"/>
    <property type="evidence" value="ECO:0007669"/>
    <property type="project" value="UniProtKB-UniRule"/>
</dbReference>
<dbReference type="GO" id="GO:0055036">
    <property type="term" value="C:virion membrane"/>
    <property type="evidence" value="ECO:0007669"/>
    <property type="project" value="UniProtKB-SubCell"/>
</dbReference>
<dbReference type="GO" id="GO:0004308">
    <property type="term" value="F:exo-alpha-sialidase activity"/>
    <property type="evidence" value="ECO:0007669"/>
    <property type="project" value="UniProtKB-UniRule"/>
</dbReference>
<dbReference type="GO" id="GO:0046872">
    <property type="term" value="F:metal ion binding"/>
    <property type="evidence" value="ECO:0007669"/>
    <property type="project" value="UniProtKB-UniRule"/>
</dbReference>
<dbReference type="GO" id="GO:0005975">
    <property type="term" value="P:carbohydrate metabolic process"/>
    <property type="evidence" value="ECO:0007669"/>
    <property type="project" value="InterPro"/>
</dbReference>
<dbReference type="GO" id="GO:0046761">
    <property type="term" value="P:viral budding from plasma membrane"/>
    <property type="evidence" value="ECO:0007669"/>
    <property type="project" value="UniProtKB-UniRule"/>
</dbReference>
<dbReference type="Gene3D" id="2.120.10.10">
    <property type="match status" value="1"/>
</dbReference>
<dbReference type="HAMAP" id="MF_04071">
    <property type="entry name" value="INFV_NRAM"/>
    <property type="match status" value="1"/>
</dbReference>
<dbReference type="InterPro" id="IPR001860">
    <property type="entry name" value="Glyco_hydro_34"/>
</dbReference>
<dbReference type="InterPro" id="IPR036278">
    <property type="entry name" value="Sialidase_sf"/>
</dbReference>
<dbReference type="Pfam" id="PF00064">
    <property type="entry name" value="Neur"/>
    <property type="match status" value="1"/>
</dbReference>
<dbReference type="SUPFAM" id="SSF50939">
    <property type="entry name" value="Sialidases"/>
    <property type="match status" value="1"/>
</dbReference>
<name>NRAM_I84A0</name>
<gene>
    <name evidence="1" type="primary">NA</name>
</gene>
<protein>
    <recommendedName>
        <fullName evidence="1">Neuraminidase</fullName>
        <ecNumber evidence="1">3.2.1.18</ecNumber>
    </recommendedName>
</protein>
<organismHost>
    <name type="scientific">Aves</name>
    <dbReference type="NCBI Taxonomy" id="8782"/>
</organismHost>
<keyword id="KW-0106">Calcium</keyword>
<keyword id="KW-1015">Disulfide bond</keyword>
<keyword id="KW-0325">Glycoprotein</keyword>
<keyword id="KW-0326">Glycosidase</keyword>
<keyword id="KW-1032">Host cell membrane</keyword>
<keyword id="KW-1043">Host membrane</keyword>
<keyword id="KW-0378">Hydrolase</keyword>
<keyword id="KW-0472">Membrane</keyword>
<keyword id="KW-0479">Metal-binding</keyword>
<keyword id="KW-0735">Signal-anchor</keyword>
<keyword id="KW-0812">Transmembrane</keyword>
<keyword id="KW-1133">Transmembrane helix</keyword>
<keyword id="KW-0946">Virion</keyword>
<evidence type="ECO:0000255" key="1">
    <source>
        <dbReference type="HAMAP-Rule" id="MF_04071"/>
    </source>
</evidence>